<dbReference type="EMBL" id="BA000003">
    <property type="protein sequence ID" value="BAB13049.1"/>
    <property type="status" value="ALT_INIT"/>
    <property type="molecule type" value="Genomic_DNA"/>
</dbReference>
<dbReference type="RefSeq" id="NP_240163.1">
    <property type="nucleotide sequence ID" value="NC_002528.1"/>
</dbReference>
<dbReference type="SMR" id="P57426"/>
<dbReference type="STRING" id="563178.BUAP5A_338"/>
<dbReference type="EnsemblBacteria" id="BAB13049">
    <property type="protein sequence ID" value="BAB13049"/>
    <property type="gene ID" value="BAB13049"/>
</dbReference>
<dbReference type="KEGG" id="buc:BU344"/>
<dbReference type="PATRIC" id="fig|107806.10.peg.356"/>
<dbReference type="eggNOG" id="COG1706">
    <property type="taxonomic scope" value="Bacteria"/>
</dbReference>
<dbReference type="HOGENOM" id="CLU_045235_1_0_6"/>
<dbReference type="Proteomes" id="UP000001806">
    <property type="component" value="Chromosome"/>
</dbReference>
<dbReference type="GO" id="GO:0009428">
    <property type="term" value="C:bacterial-type flagellum basal body, distal rod, P ring"/>
    <property type="evidence" value="ECO:0007669"/>
    <property type="project" value="InterPro"/>
</dbReference>
<dbReference type="GO" id="GO:0030288">
    <property type="term" value="C:outer membrane-bounded periplasmic space"/>
    <property type="evidence" value="ECO:0007669"/>
    <property type="project" value="InterPro"/>
</dbReference>
<dbReference type="GO" id="GO:0005198">
    <property type="term" value="F:structural molecule activity"/>
    <property type="evidence" value="ECO:0007669"/>
    <property type="project" value="InterPro"/>
</dbReference>
<dbReference type="GO" id="GO:0071973">
    <property type="term" value="P:bacterial-type flagellum-dependent cell motility"/>
    <property type="evidence" value="ECO:0007669"/>
    <property type="project" value="InterPro"/>
</dbReference>
<dbReference type="HAMAP" id="MF_00416">
    <property type="entry name" value="FlgI"/>
    <property type="match status" value="1"/>
</dbReference>
<dbReference type="InterPro" id="IPR001782">
    <property type="entry name" value="Flag_FlgI"/>
</dbReference>
<dbReference type="NCBIfam" id="NF003676">
    <property type="entry name" value="PRK05303.1"/>
    <property type="match status" value="1"/>
</dbReference>
<dbReference type="PANTHER" id="PTHR30381">
    <property type="entry name" value="FLAGELLAR P-RING PERIPLASMIC PROTEIN FLGI"/>
    <property type="match status" value="1"/>
</dbReference>
<dbReference type="PANTHER" id="PTHR30381:SF0">
    <property type="entry name" value="FLAGELLAR P-RING PROTEIN"/>
    <property type="match status" value="1"/>
</dbReference>
<dbReference type="Pfam" id="PF02119">
    <property type="entry name" value="FlgI"/>
    <property type="match status" value="1"/>
</dbReference>
<dbReference type="PRINTS" id="PR01010">
    <property type="entry name" value="FLGPRINGFLGI"/>
</dbReference>
<reference key="1">
    <citation type="journal article" date="2000" name="Nature">
        <title>Genome sequence of the endocellular bacterial symbiont of aphids Buchnera sp. APS.</title>
        <authorList>
            <person name="Shigenobu S."/>
            <person name="Watanabe H."/>
            <person name="Hattori M."/>
            <person name="Sakaki Y."/>
            <person name="Ishikawa H."/>
        </authorList>
    </citation>
    <scope>NUCLEOTIDE SEQUENCE [LARGE SCALE GENOMIC DNA]</scope>
    <source>
        <strain>APS</strain>
    </source>
</reference>
<name>FLGI_BUCAI</name>
<comment type="function">
    <text evidence="1">Assembles around the rod to form the L-ring and probably protects the motor/basal body from shearing forces during rotation.</text>
</comment>
<comment type="subunit">
    <text evidence="1">The basal body constitutes a major portion of the flagellar organelle and consists of four rings (L,P,S, and M) mounted on a central rod.</text>
</comment>
<comment type="subcellular location">
    <subcellularLocation>
        <location evidence="1">Bacterial flagellum basal body</location>
    </subcellularLocation>
</comment>
<comment type="similarity">
    <text evidence="3">Belongs to the FlgI family.</text>
</comment>
<comment type="sequence caution" evidence="3">
    <conflict type="erroneous initiation">
        <sequence resource="EMBL-CDS" id="BAB13049"/>
    </conflict>
</comment>
<protein>
    <recommendedName>
        <fullName>Flagellar P-ring protein</fullName>
    </recommendedName>
    <alternativeName>
        <fullName>Basal body P-ring protein</fullName>
    </alternativeName>
</protein>
<feature type="signal peptide" evidence="2">
    <location>
        <begin position="1"/>
        <end position="25"/>
    </location>
</feature>
<feature type="chain" id="PRO_0000009495" description="Flagellar P-ring protein">
    <location>
        <begin position="26"/>
        <end position="372"/>
    </location>
</feature>
<evidence type="ECO:0000250" key="1"/>
<evidence type="ECO:0000255" key="2"/>
<evidence type="ECO:0000305" key="3"/>
<organism>
    <name type="scientific">Buchnera aphidicola subsp. Acyrthosiphon pisum (strain APS)</name>
    <name type="common">Acyrthosiphon pisum symbiotic bacterium</name>
    <dbReference type="NCBI Taxonomy" id="107806"/>
    <lineage>
        <taxon>Bacteria</taxon>
        <taxon>Pseudomonadati</taxon>
        <taxon>Pseudomonadota</taxon>
        <taxon>Gammaproteobacteria</taxon>
        <taxon>Enterobacterales</taxon>
        <taxon>Erwiniaceae</taxon>
        <taxon>Buchnera</taxon>
    </lineage>
</organism>
<accession>P57426</accession>
<sequence>MSKKILFLIKVIVFIFTTFSLPLYAEKIRDLTSIQGIRDNPLIGYGLIVGLDGTGDQSTQAPFTNQSLKNMLSQLGVSIPSNTNMNTKNVAAVIVTANLPPFSHAGEKIDVVVSSMGNARSLKGGTLLMTPLKGANNQIYAIAQGNILVSEKNNKKSKIHNFYSNQVNSGKIHHGATIEREIDNNFGKQKTINLQLNQENFSTAQRISDMINTKYPDTATPINSKTVQLNTSANNDVQVHMLSNIQDIDISLPSQEAKVVVNSRTGSIVINQSVRLGSCVVSNGNMSIIVHQIKNKKRDLYFLKSFNKNIKKDQSIEDMADKNYMNDIATNKENLHNIVRALNKLGTKPDELMSILQLMKSAGCLNAKLEIV</sequence>
<keyword id="KW-0975">Bacterial flagellum</keyword>
<keyword id="KW-1185">Reference proteome</keyword>
<keyword id="KW-0732">Signal</keyword>
<proteinExistence type="inferred from homology"/>
<gene>
    <name type="primary">flgI</name>
    <name type="ordered locus">BU344</name>
</gene>